<dbReference type="EC" id="2.7.4.6" evidence="1"/>
<dbReference type="EMBL" id="CP000094">
    <property type="protein sequence ID" value="ABA76342.1"/>
    <property type="molecule type" value="Genomic_DNA"/>
</dbReference>
<dbReference type="RefSeq" id="WP_011335812.1">
    <property type="nucleotide sequence ID" value="NC_007492.2"/>
</dbReference>
<dbReference type="SMR" id="Q3K7B2"/>
<dbReference type="KEGG" id="pfo:Pfl01_4605"/>
<dbReference type="eggNOG" id="COG0105">
    <property type="taxonomic scope" value="Bacteria"/>
</dbReference>
<dbReference type="HOGENOM" id="CLU_060216_8_1_6"/>
<dbReference type="Proteomes" id="UP000002704">
    <property type="component" value="Chromosome"/>
</dbReference>
<dbReference type="GO" id="GO:0005737">
    <property type="term" value="C:cytoplasm"/>
    <property type="evidence" value="ECO:0007669"/>
    <property type="project" value="UniProtKB-SubCell"/>
</dbReference>
<dbReference type="GO" id="GO:0005524">
    <property type="term" value="F:ATP binding"/>
    <property type="evidence" value="ECO:0007669"/>
    <property type="project" value="UniProtKB-UniRule"/>
</dbReference>
<dbReference type="GO" id="GO:0046872">
    <property type="term" value="F:metal ion binding"/>
    <property type="evidence" value="ECO:0007669"/>
    <property type="project" value="UniProtKB-KW"/>
</dbReference>
<dbReference type="GO" id="GO:0004550">
    <property type="term" value="F:nucleoside diphosphate kinase activity"/>
    <property type="evidence" value="ECO:0007669"/>
    <property type="project" value="UniProtKB-UniRule"/>
</dbReference>
<dbReference type="GO" id="GO:0006241">
    <property type="term" value="P:CTP biosynthetic process"/>
    <property type="evidence" value="ECO:0007669"/>
    <property type="project" value="UniProtKB-UniRule"/>
</dbReference>
<dbReference type="GO" id="GO:0006183">
    <property type="term" value="P:GTP biosynthetic process"/>
    <property type="evidence" value="ECO:0007669"/>
    <property type="project" value="UniProtKB-UniRule"/>
</dbReference>
<dbReference type="GO" id="GO:0006228">
    <property type="term" value="P:UTP biosynthetic process"/>
    <property type="evidence" value="ECO:0007669"/>
    <property type="project" value="UniProtKB-UniRule"/>
</dbReference>
<dbReference type="CDD" id="cd04413">
    <property type="entry name" value="NDPk_I"/>
    <property type="match status" value="1"/>
</dbReference>
<dbReference type="FunFam" id="3.30.70.141:FF:000001">
    <property type="entry name" value="Nucleoside diphosphate kinase"/>
    <property type="match status" value="1"/>
</dbReference>
<dbReference type="Gene3D" id="3.30.70.141">
    <property type="entry name" value="Nucleoside diphosphate kinase-like domain"/>
    <property type="match status" value="1"/>
</dbReference>
<dbReference type="HAMAP" id="MF_00451">
    <property type="entry name" value="NDP_kinase"/>
    <property type="match status" value="1"/>
</dbReference>
<dbReference type="InterPro" id="IPR034907">
    <property type="entry name" value="NDK-like_dom"/>
</dbReference>
<dbReference type="InterPro" id="IPR036850">
    <property type="entry name" value="NDK-like_dom_sf"/>
</dbReference>
<dbReference type="InterPro" id="IPR001564">
    <property type="entry name" value="Nucleoside_diP_kinase"/>
</dbReference>
<dbReference type="InterPro" id="IPR023005">
    <property type="entry name" value="Nucleoside_diP_kinase_AS"/>
</dbReference>
<dbReference type="NCBIfam" id="NF001908">
    <property type="entry name" value="PRK00668.1"/>
    <property type="match status" value="1"/>
</dbReference>
<dbReference type="PANTHER" id="PTHR46161">
    <property type="entry name" value="NUCLEOSIDE DIPHOSPHATE KINASE"/>
    <property type="match status" value="1"/>
</dbReference>
<dbReference type="PANTHER" id="PTHR46161:SF3">
    <property type="entry name" value="NUCLEOSIDE DIPHOSPHATE KINASE DDB_G0292928-RELATED"/>
    <property type="match status" value="1"/>
</dbReference>
<dbReference type="Pfam" id="PF00334">
    <property type="entry name" value="NDK"/>
    <property type="match status" value="1"/>
</dbReference>
<dbReference type="PRINTS" id="PR01243">
    <property type="entry name" value="NUCDPKINASE"/>
</dbReference>
<dbReference type="SMART" id="SM00562">
    <property type="entry name" value="NDK"/>
    <property type="match status" value="1"/>
</dbReference>
<dbReference type="SUPFAM" id="SSF54919">
    <property type="entry name" value="Nucleoside diphosphate kinase, NDK"/>
    <property type="match status" value="1"/>
</dbReference>
<dbReference type="PROSITE" id="PS00469">
    <property type="entry name" value="NDPK"/>
    <property type="match status" value="1"/>
</dbReference>
<dbReference type="PROSITE" id="PS51374">
    <property type="entry name" value="NDPK_LIKE"/>
    <property type="match status" value="1"/>
</dbReference>
<comment type="function">
    <text evidence="1">Major role in the synthesis of nucleoside triphosphates other than ATP. The ATP gamma phosphate is transferred to the NDP beta phosphate via a ping-pong mechanism, using a phosphorylated active-site intermediate.</text>
</comment>
<comment type="catalytic activity">
    <reaction evidence="1">
        <text>a 2'-deoxyribonucleoside 5'-diphosphate + ATP = a 2'-deoxyribonucleoside 5'-triphosphate + ADP</text>
        <dbReference type="Rhea" id="RHEA:44640"/>
        <dbReference type="ChEBI" id="CHEBI:30616"/>
        <dbReference type="ChEBI" id="CHEBI:61560"/>
        <dbReference type="ChEBI" id="CHEBI:73316"/>
        <dbReference type="ChEBI" id="CHEBI:456216"/>
        <dbReference type="EC" id="2.7.4.6"/>
    </reaction>
</comment>
<comment type="catalytic activity">
    <reaction evidence="1">
        <text>a ribonucleoside 5'-diphosphate + ATP = a ribonucleoside 5'-triphosphate + ADP</text>
        <dbReference type="Rhea" id="RHEA:18113"/>
        <dbReference type="ChEBI" id="CHEBI:30616"/>
        <dbReference type="ChEBI" id="CHEBI:57930"/>
        <dbReference type="ChEBI" id="CHEBI:61557"/>
        <dbReference type="ChEBI" id="CHEBI:456216"/>
        <dbReference type="EC" id="2.7.4.6"/>
    </reaction>
</comment>
<comment type="cofactor">
    <cofactor evidence="1">
        <name>Mg(2+)</name>
        <dbReference type="ChEBI" id="CHEBI:18420"/>
    </cofactor>
</comment>
<comment type="subunit">
    <text evidence="1">Homotetramer.</text>
</comment>
<comment type="subcellular location">
    <subcellularLocation>
        <location evidence="1">Cytoplasm</location>
    </subcellularLocation>
</comment>
<comment type="similarity">
    <text evidence="1">Belongs to the NDK family.</text>
</comment>
<sequence length="141" mass="15036">MAVQRTFSIIKPDAVAKNVIGKITTRFEDAGLRVVASKLKQLSKAEAEGFYAEHSARGFFGELVAFMTSGPVVVQVLEGENAIARNRELMGATNPKEAAPGTIRADFAESIDANAVHGSDSEAAAAREIAYFFAATEVTTR</sequence>
<organism>
    <name type="scientific">Pseudomonas fluorescens (strain Pf0-1)</name>
    <dbReference type="NCBI Taxonomy" id="205922"/>
    <lineage>
        <taxon>Bacteria</taxon>
        <taxon>Pseudomonadati</taxon>
        <taxon>Pseudomonadota</taxon>
        <taxon>Gammaproteobacteria</taxon>
        <taxon>Pseudomonadales</taxon>
        <taxon>Pseudomonadaceae</taxon>
        <taxon>Pseudomonas</taxon>
    </lineage>
</organism>
<gene>
    <name evidence="1" type="primary">ndk</name>
    <name type="ordered locus">Pfl01_4605</name>
</gene>
<name>NDK_PSEPF</name>
<feature type="chain" id="PRO_0000226571" description="Nucleoside diphosphate kinase">
    <location>
        <begin position="1"/>
        <end position="141"/>
    </location>
</feature>
<feature type="active site" description="Pros-phosphohistidine intermediate" evidence="1">
    <location>
        <position position="117"/>
    </location>
</feature>
<feature type="binding site" evidence="1">
    <location>
        <position position="11"/>
    </location>
    <ligand>
        <name>ATP</name>
        <dbReference type="ChEBI" id="CHEBI:30616"/>
    </ligand>
</feature>
<feature type="binding site" evidence="1">
    <location>
        <position position="59"/>
    </location>
    <ligand>
        <name>ATP</name>
        <dbReference type="ChEBI" id="CHEBI:30616"/>
    </ligand>
</feature>
<feature type="binding site" evidence="1">
    <location>
        <position position="87"/>
    </location>
    <ligand>
        <name>ATP</name>
        <dbReference type="ChEBI" id="CHEBI:30616"/>
    </ligand>
</feature>
<feature type="binding site" evidence="1">
    <location>
        <position position="93"/>
    </location>
    <ligand>
        <name>ATP</name>
        <dbReference type="ChEBI" id="CHEBI:30616"/>
    </ligand>
</feature>
<feature type="binding site" evidence="1">
    <location>
        <position position="104"/>
    </location>
    <ligand>
        <name>ATP</name>
        <dbReference type="ChEBI" id="CHEBI:30616"/>
    </ligand>
</feature>
<feature type="binding site" evidence="1">
    <location>
        <position position="114"/>
    </location>
    <ligand>
        <name>ATP</name>
        <dbReference type="ChEBI" id="CHEBI:30616"/>
    </ligand>
</feature>
<protein>
    <recommendedName>
        <fullName evidence="1">Nucleoside diphosphate kinase</fullName>
        <shortName evidence="1">NDK</shortName>
        <shortName evidence="1">NDP kinase</shortName>
        <ecNumber evidence="1">2.7.4.6</ecNumber>
    </recommendedName>
    <alternativeName>
        <fullName evidence="1">Nucleoside-2-P kinase</fullName>
    </alternativeName>
</protein>
<accession>Q3K7B2</accession>
<keyword id="KW-0067">ATP-binding</keyword>
<keyword id="KW-0963">Cytoplasm</keyword>
<keyword id="KW-0418">Kinase</keyword>
<keyword id="KW-0460">Magnesium</keyword>
<keyword id="KW-0479">Metal-binding</keyword>
<keyword id="KW-0546">Nucleotide metabolism</keyword>
<keyword id="KW-0547">Nucleotide-binding</keyword>
<keyword id="KW-0597">Phosphoprotein</keyword>
<keyword id="KW-0808">Transferase</keyword>
<evidence type="ECO:0000255" key="1">
    <source>
        <dbReference type="HAMAP-Rule" id="MF_00451"/>
    </source>
</evidence>
<proteinExistence type="inferred from homology"/>
<reference key="1">
    <citation type="journal article" date="2009" name="Genome Biol.">
        <title>Genomic and genetic analyses of diversity and plant interactions of Pseudomonas fluorescens.</title>
        <authorList>
            <person name="Silby M.W."/>
            <person name="Cerdeno-Tarraga A.M."/>
            <person name="Vernikos G.S."/>
            <person name="Giddens S.R."/>
            <person name="Jackson R.W."/>
            <person name="Preston G.M."/>
            <person name="Zhang X.-X."/>
            <person name="Moon C.D."/>
            <person name="Gehrig S.M."/>
            <person name="Godfrey S.A.C."/>
            <person name="Knight C.G."/>
            <person name="Malone J.G."/>
            <person name="Robinson Z."/>
            <person name="Spiers A.J."/>
            <person name="Harris S."/>
            <person name="Challis G.L."/>
            <person name="Yaxley A.M."/>
            <person name="Harris D."/>
            <person name="Seeger K."/>
            <person name="Murphy L."/>
            <person name="Rutter S."/>
            <person name="Squares R."/>
            <person name="Quail M.A."/>
            <person name="Saunders E."/>
            <person name="Mavromatis K."/>
            <person name="Brettin T.S."/>
            <person name="Bentley S.D."/>
            <person name="Hothersall J."/>
            <person name="Stephens E."/>
            <person name="Thomas C.M."/>
            <person name="Parkhill J."/>
            <person name="Levy S.B."/>
            <person name="Rainey P.B."/>
            <person name="Thomson N.R."/>
        </authorList>
    </citation>
    <scope>NUCLEOTIDE SEQUENCE [LARGE SCALE GENOMIC DNA]</scope>
    <source>
        <strain>Pf0-1</strain>
    </source>
</reference>